<dbReference type="EC" id="1.17.99.9" evidence="1"/>
<dbReference type="EMBL" id="CP000903">
    <property type="protein sequence ID" value="ABY44941.1"/>
    <property type="molecule type" value="Genomic_DNA"/>
</dbReference>
<dbReference type="RefSeq" id="WP_002088309.1">
    <property type="nucleotide sequence ID" value="NC_010184.1"/>
</dbReference>
<dbReference type="SMR" id="A9VUA7"/>
<dbReference type="GeneID" id="66266488"/>
<dbReference type="KEGG" id="bwe:BcerKBAB4_3772"/>
<dbReference type="eggNOG" id="COG1612">
    <property type="taxonomic scope" value="Bacteria"/>
</dbReference>
<dbReference type="HOGENOM" id="CLU_041525_3_1_9"/>
<dbReference type="UniPathway" id="UPA00269">
    <property type="reaction ID" value="UER00713"/>
</dbReference>
<dbReference type="Proteomes" id="UP000002154">
    <property type="component" value="Chromosome"/>
</dbReference>
<dbReference type="GO" id="GO:0005886">
    <property type="term" value="C:plasma membrane"/>
    <property type="evidence" value="ECO:0007669"/>
    <property type="project" value="UniProtKB-SubCell"/>
</dbReference>
<dbReference type="GO" id="GO:0046872">
    <property type="term" value="F:metal ion binding"/>
    <property type="evidence" value="ECO:0007669"/>
    <property type="project" value="UniProtKB-KW"/>
</dbReference>
<dbReference type="GO" id="GO:0016653">
    <property type="term" value="F:oxidoreductase activity, acting on NAD(P)H, heme protein as acceptor"/>
    <property type="evidence" value="ECO:0007669"/>
    <property type="project" value="InterPro"/>
</dbReference>
<dbReference type="GO" id="GO:0006784">
    <property type="term" value="P:heme A biosynthetic process"/>
    <property type="evidence" value="ECO:0007669"/>
    <property type="project" value="UniProtKB-UniRule"/>
</dbReference>
<dbReference type="HAMAP" id="MF_01664">
    <property type="entry name" value="HemeA_synth_type1"/>
    <property type="match status" value="1"/>
</dbReference>
<dbReference type="InterPro" id="IPR003780">
    <property type="entry name" value="COX15/CtaA_fam"/>
</dbReference>
<dbReference type="InterPro" id="IPR050450">
    <property type="entry name" value="COX15/CtaA_HemeA_synthase"/>
</dbReference>
<dbReference type="InterPro" id="IPR023755">
    <property type="entry name" value="HemeA_Synthase_type1"/>
</dbReference>
<dbReference type="PANTHER" id="PTHR35457">
    <property type="entry name" value="HEME A SYNTHASE"/>
    <property type="match status" value="1"/>
</dbReference>
<dbReference type="PANTHER" id="PTHR35457:SF1">
    <property type="entry name" value="HEME A SYNTHASE"/>
    <property type="match status" value="1"/>
</dbReference>
<dbReference type="Pfam" id="PF02628">
    <property type="entry name" value="COX15-CtaA"/>
    <property type="match status" value="1"/>
</dbReference>
<keyword id="KW-1003">Cell membrane</keyword>
<keyword id="KW-1015">Disulfide bond</keyword>
<keyword id="KW-0350">Heme biosynthesis</keyword>
<keyword id="KW-0408">Iron</keyword>
<keyword id="KW-0472">Membrane</keyword>
<keyword id="KW-0479">Metal-binding</keyword>
<keyword id="KW-0560">Oxidoreductase</keyword>
<keyword id="KW-0812">Transmembrane</keyword>
<keyword id="KW-1133">Transmembrane helix</keyword>
<proteinExistence type="inferred from homology"/>
<protein>
    <recommendedName>
        <fullName evidence="1">Heme A synthase</fullName>
        <shortName evidence="1">HAS</shortName>
        <ecNumber evidence="1">1.17.99.9</ecNumber>
    </recommendedName>
    <alternativeName>
        <fullName evidence="1">Cytochrome aa3-controlling protein</fullName>
    </alternativeName>
</protein>
<comment type="function">
    <text evidence="1">Catalyzes the conversion of heme O to heme A by two successive hydroxylations of the methyl group at C8. The first hydroxylation forms heme I, the second hydroxylation results in an unstable dihydroxymethyl group, which spontaneously dehydrates, resulting in the formyl group of heme A.</text>
</comment>
<comment type="catalytic activity">
    <reaction evidence="1">
        <text>Fe(II)-heme o + 2 A + H2O = Fe(II)-heme a + 2 AH2</text>
        <dbReference type="Rhea" id="RHEA:63388"/>
        <dbReference type="ChEBI" id="CHEBI:13193"/>
        <dbReference type="ChEBI" id="CHEBI:15377"/>
        <dbReference type="ChEBI" id="CHEBI:17499"/>
        <dbReference type="ChEBI" id="CHEBI:60530"/>
        <dbReference type="ChEBI" id="CHEBI:61715"/>
        <dbReference type="EC" id="1.17.99.9"/>
    </reaction>
    <physiologicalReaction direction="left-to-right" evidence="1">
        <dbReference type="Rhea" id="RHEA:63389"/>
    </physiologicalReaction>
</comment>
<comment type="cofactor">
    <cofactor evidence="1">
        <name>heme b</name>
        <dbReference type="ChEBI" id="CHEBI:60344"/>
    </cofactor>
</comment>
<comment type="pathway">
    <text evidence="1">Porphyrin-containing compound metabolism; heme A biosynthesis; heme A from heme O: step 1/1.</text>
</comment>
<comment type="subunit">
    <text evidence="1">Interacts with CtaB.</text>
</comment>
<comment type="subcellular location">
    <subcellularLocation>
        <location evidence="1">Cell membrane</location>
        <topology evidence="1">Multi-pass membrane protein</topology>
    </subcellularLocation>
</comment>
<comment type="domain">
    <text evidence="1">The N-half (TM1-TM4) and C-half (TM5-TM8) domains are connected by an intracellular loop. Each domain is formed from four-helix bundles and they align in a pseudo twofold symmetry manner. The N-half domain is the substrate-heme O binding domain and the C-half domain is the cofactor heme B binding domain.</text>
</comment>
<comment type="domain">
    <text evidence="1">The cysteines of disulfide bond Cys-35 and Cys-42 may be involved in transfer of reducing equivalents from quinol in the membrane to the active site of the enzyme.</text>
</comment>
<comment type="similarity">
    <text evidence="1">Belongs to the COX15/CtaA family. Type 1 subfamily.</text>
</comment>
<sequence>MQRFIKWLAVITSLDLLVVLLGGALVTKTGSGQGCGKSWPLCNGEFVPSNLSMETIIELSHRLTSGSAGILVTLLCILSWKYYKHVRETKTLAILSFVFLVAQALMGAAAVVWGQMPAVLAIHFGISLISFASVILLTCLIFEIDQKFDARSLIMDKKMKFHIYGVTIYSYIVVYTGALVRHERATLACPDFPLCSKSRPMPTQLHEWVQMGHRVAAMLIFAWILYAMIIAIRHYKQQRVVYWGWIISFILVTLQAIVGILVVFTNASLAMALLHSLFISCLFAVLCYLVMIGTRSTVNAKETESTSKQTK</sequence>
<accession>A9VUA7</accession>
<name>CTAA_BACMK</name>
<gene>
    <name evidence="1" type="primary">ctaA</name>
    <name type="ordered locus">BcerKBAB4_3772</name>
</gene>
<reference key="1">
    <citation type="journal article" date="2008" name="Chem. Biol. Interact.">
        <title>Extending the Bacillus cereus group genomics to putative food-borne pathogens of different toxicity.</title>
        <authorList>
            <person name="Lapidus A."/>
            <person name="Goltsman E."/>
            <person name="Auger S."/>
            <person name="Galleron N."/>
            <person name="Segurens B."/>
            <person name="Dossat C."/>
            <person name="Land M.L."/>
            <person name="Broussolle V."/>
            <person name="Brillard J."/>
            <person name="Guinebretiere M.-H."/>
            <person name="Sanchis V."/>
            <person name="Nguen-the C."/>
            <person name="Lereclus D."/>
            <person name="Richardson P."/>
            <person name="Wincker P."/>
            <person name="Weissenbach J."/>
            <person name="Ehrlich S.D."/>
            <person name="Sorokin A."/>
        </authorList>
    </citation>
    <scope>NUCLEOTIDE SEQUENCE [LARGE SCALE GENOMIC DNA]</scope>
    <source>
        <strain>KBAB4</strain>
    </source>
</reference>
<organism>
    <name type="scientific">Bacillus mycoides (strain KBAB4)</name>
    <name type="common">Bacillus weihenstephanensis</name>
    <dbReference type="NCBI Taxonomy" id="315730"/>
    <lineage>
        <taxon>Bacteria</taxon>
        <taxon>Bacillati</taxon>
        <taxon>Bacillota</taxon>
        <taxon>Bacilli</taxon>
        <taxon>Bacillales</taxon>
        <taxon>Bacillaceae</taxon>
        <taxon>Bacillus</taxon>
        <taxon>Bacillus cereus group</taxon>
    </lineage>
</organism>
<evidence type="ECO:0000255" key="1">
    <source>
        <dbReference type="HAMAP-Rule" id="MF_01664"/>
    </source>
</evidence>
<feature type="chain" id="PRO_0000348977" description="Heme A synthase">
    <location>
        <begin position="1"/>
        <end position="311"/>
    </location>
</feature>
<feature type="topological domain" description="Cytoplasmic" evidence="1">
    <location>
        <begin position="1"/>
        <end position="6"/>
    </location>
</feature>
<feature type="transmembrane region" description="Helical" evidence="1">
    <location>
        <begin position="7"/>
        <end position="27"/>
    </location>
</feature>
<feature type="topological domain" description="Extracellular" evidence="1">
    <location>
        <begin position="28"/>
        <end position="62"/>
    </location>
</feature>
<feature type="transmembrane region" description="Helical" evidence="1">
    <location>
        <begin position="63"/>
        <end position="83"/>
    </location>
</feature>
<feature type="topological domain" description="Cytoplasmic" evidence="1">
    <location>
        <begin position="84"/>
        <end position="91"/>
    </location>
</feature>
<feature type="transmembrane region" description="Helical" evidence="1">
    <location>
        <begin position="92"/>
        <end position="112"/>
    </location>
</feature>
<feature type="topological domain" description="Extracellular" evidence="1">
    <location>
        <begin position="113"/>
        <end position="121"/>
    </location>
</feature>
<feature type="transmembrane region" description="Helical" evidence="1">
    <location>
        <begin position="122"/>
        <end position="142"/>
    </location>
</feature>
<feature type="topological domain" description="Cytoplasmic" evidence="1">
    <location>
        <begin position="143"/>
        <end position="159"/>
    </location>
</feature>
<feature type="transmembrane region" description="Helical" evidence="1">
    <location>
        <begin position="160"/>
        <end position="180"/>
    </location>
</feature>
<feature type="topological domain" description="Extracellular" evidence="1">
    <location>
        <begin position="181"/>
        <end position="211"/>
    </location>
</feature>
<feature type="transmembrane region" description="Helical" evidence="1">
    <location>
        <begin position="212"/>
        <end position="232"/>
    </location>
</feature>
<feature type="topological domain" description="Cytoplasmic" evidence="1">
    <location>
        <begin position="233"/>
        <end position="243"/>
    </location>
</feature>
<feature type="transmembrane region" description="Helical" evidence="1">
    <location>
        <begin position="244"/>
        <end position="264"/>
    </location>
</feature>
<feature type="topological domain" description="Extracellular" evidence="1">
    <location>
        <begin position="265"/>
        <end position="271"/>
    </location>
</feature>
<feature type="transmembrane region" description="Helical" evidence="1">
    <location>
        <begin position="272"/>
        <end position="292"/>
    </location>
</feature>
<feature type="topological domain" description="Cytoplasmic" evidence="1">
    <location>
        <begin position="293"/>
        <end position="311"/>
    </location>
</feature>
<feature type="active site" evidence="1">
    <location>
        <position position="58"/>
    </location>
</feature>
<feature type="binding site" description="axial binding residue" evidence="1">
    <location>
        <position position="61"/>
    </location>
    <ligand>
        <name>heme o</name>
        <dbReference type="ChEBI" id="CHEBI:24480"/>
    </ligand>
    <ligandPart>
        <name>Fe</name>
        <dbReference type="ChEBI" id="CHEBI:18248"/>
    </ligandPart>
</feature>
<feature type="binding site" description="axial binding residue" evidence="1">
    <location>
        <position position="123"/>
    </location>
    <ligand>
        <name>heme o</name>
        <dbReference type="ChEBI" id="CHEBI:24480"/>
    </ligand>
    <ligandPart>
        <name>Fe</name>
        <dbReference type="ChEBI" id="CHEBI:18248"/>
    </ligandPart>
</feature>
<feature type="binding site" description="axial binding residue" evidence="1">
    <location>
        <position position="213"/>
    </location>
    <ligand>
        <name>heme b</name>
        <dbReference type="ChEBI" id="CHEBI:60344"/>
    </ligand>
    <ligandPart>
        <name>Fe</name>
        <dbReference type="ChEBI" id="CHEBI:18248"/>
    </ligandPart>
</feature>
<feature type="binding site" description="axial binding residue" evidence="1">
    <location>
        <position position="275"/>
    </location>
    <ligand>
        <name>heme b</name>
        <dbReference type="ChEBI" id="CHEBI:60344"/>
    </ligand>
    <ligandPart>
        <name>Fe</name>
        <dbReference type="ChEBI" id="CHEBI:18248"/>
    </ligandPart>
</feature>
<feature type="disulfide bond" description="Essential for catalytic activity" evidence="1">
    <location>
        <begin position="35"/>
        <end position="42"/>
    </location>
</feature>
<feature type="disulfide bond" evidence="1">
    <location>
        <begin position="189"/>
        <end position="195"/>
    </location>
</feature>